<gene>
    <name evidence="1" type="primary">mnmG</name>
    <name evidence="1" type="synonym">gidA</name>
    <name type="ordered locus">str2002</name>
</gene>
<organism>
    <name type="scientific">Streptococcus thermophilus (strain CNRZ 1066)</name>
    <dbReference type="NCBI Taxonomy" id="299768"/>
    <lineage>
        <taxon>Bacteria</taxon>
        <taxon>Bacillati</taxon>
        <taxon>Bacillota</taxon>
        <taxon>Bacilli</taxon>
        <taxon>Lactobacillales</taxon>
        <taxon>Streptococcaceae</taxon>
        <taxon>Streptococcus</taxon>
    </lineage>
</organism>
<evidence type="ECO:0000255" key="1">
    <source>
        <dbReference type="HAMAP-Rule" id="MF_00129"/>
    </source>
</evidence>
<evidence type="ECO:0000305" key="2"/>
<accession>Q5LXK0</accession>
<keyword id="KW-0963">Cytoplasm</keyword>
<keyword id="KW-0274">FAD</keyword>
<keyword id="KW-0285">Flavoprotein</keyword>
<keyword id="KW-0520">NAD</keyword>
<keyword id="KW-0819">tRNA processing</keyword>
<proteinExistence type="inferred from homology"/>
<dbReference type="EMBL" id="CP000024">
    <property type="protein sequence ID" value="AAV63512.1"/>
    <property type="status" value="ALT_INIT"/>
    <property type="molecule type" value="Genomic_DNA"/>
</dbReference>
<dbReference type="RefSeq" id="WP_041827119.1">
    <property type="nucleotide sequence ID" value="NC_006449.1"/>
</dbReference>
<dbReference type="SMR" id="Q5LXK0"/>
<dbReference type="GeneID" id="66899728"/>
<dbReference type="KEGG" id="stc:str2002"/>
<dbReference type="HOGENOM" id="CLU_007831_2_2_9"/>
<dbReference type="GO" id="GO:0005829">
    <property type="term" value="C:cytosol"/>
    <property type="evidence" value="ECO:0007669"/>
    <property type="project" value="TreeGrafter"/>
</dbReference>
<dbReference type="GO" id="GO:0050660">
    <property type="term" value="F:flavin adenine dinucleotide binding"/>
    <property type="evidence" value="ECO:0007669"/>
    <property type="project" value="UniProtKB-UniRule"/>
</dbReference>
<dbReference type="GO" id="GO:0030488">
    <property type="term" value="P:tRNA methylation"/>
    <property type="evidence" value="ECO:0007669"/>
    <property type="project" value="TreeGrafter"/>
</dbReference>
<dbReference type="GO" id="GO:0002098">
    <property type="term" value="P:tRNA wobble uridine modification"/>
    <property type="evidence" value="ECO:0007669"/>
    <property type="project" value="InterPro"/>
</dbReference>
<dbReference type="FunFam" id="1.10.10.1800:FF:000001">
    <property type="entry name" value="tRNA uridine 5-carboxymethylaminomethyl modification enzyme MnmG"/>
    <property type="match status" value="1"/>
</dbReference>
<dbReference type="FunFam" id="1.10.150.570:FF:000001">
    <property type="entry name" value="tRNA uridine 5-carboxymethylaminomethyl modification enzyme MnmG"/>
    <property type="match status" value="1"/>
</dbReference>
<dbReference type="FunFam" id="3.50.50.60:FF:000002">
    <property type="entry name" value="tRNA uridine 5-carboxymethylaminomethyl modification enzyme MnmG"/>
    <property type="match status" value="1"/>
</dbReference>
<dbReference type="FunFam" id="3.50.50.60:FF:000063">
    <property type="entry name" value="tRNA uridine 5-carboxymethylaminomethyl modification enzyme MnmG"/>
    <property type="match status" value="1"/>
</dbReference>
<dbReference type="Gene3D" id="3.50.50.60">
    <property type="entry name" value="FAD/NAD(P)-binding domain"/>
    <property type="match status" value="2"/>
</dbReference>
<dbReference type="Gene3D" id="1.10.150.570">
    <property type="entry name" value="GidA associated domain, C-terminal subdomain"/>
    <property type="match status" value="1"/>
</dbReference>
<dbReference type="Gene3D" id="1.10.10.1800">
    <property type="entry name" value="tRNA uridine 5-carboxymethylaminomethyl modification enzyme MnmG/GidA"/>
    <property type="match status" value="1"/>
</dbReference>
<dbReference type="HAMAP" id="MF_00129">
    <property type="entry name" value="MnmG_GidA"/>
    <property type="match status" value="1"/>
</dbReference>
<dbReference type="InterPro" id="IPR036188">
    <property type="entry name" value="FAD/NAD-bd_sf"/>
</dbReference>
<dbReference type="InterPro" id="IPR049312">
    <property type="entry name" value="GIDA_C_N"/>
</dbReference>
<dbReference type="InterPro" id="IPR004416">
    <property type="entry name" value="MnmG"/>
</dbReference>
<dbReference type="InterPro" id="IPR002218">
    <property type="entry name" value="MnmG-rel"/>
</dbReference>
<dbReference type="InterPro" id="IPR020595">
    <property type="entry name" value="MnmG-rel_CS"/>
</dbReference>
<dbReference type="InterPro" id="IPR026904">
    <property type="entry name" value="MnmG_C"/>
</dbReference>
<dbReference type="InterPro" id="IPR047001">
    <property type="entry name" value="MnmG_C_subdom"/>
</dbReference>
<dbReference type="InterPro" id="IPR044920">
    <property type="entry name" value="MnmG_C_subdom_sf"/>
</dbReference>
<dbReference type="InterPro" id="IPR040131">
    <property type="entry name" value="MnmG_N"/>
</dbReference>
<dbReference type="NCBIfam" id="TIGR00136">
    <property type="entry name" value="mnmG_gidA"/>
    <property type="match status" value="1"/>
</dbReference>
<dbReference type="PANTHER" id="PTHR11806">
    <property type="entry name" value="GLUCOSE INHIBITED DIVISION PROTEIN A"/>
    <property type="match status" value="1"/>
</dbReference>
<dbReference type="PANTHER" id="PTHR11806:SF0">
    <property type="entry name" value="PROTEIN MTO1 HOMOLOG, MITOCHONDRIAL"/>
    <property type="match status" value="1"/>
</dbReference>
<dbReference type="Pfam" id="PF01134">
    <property type="entry name" value="GIDA"/>
    <property type="match status" value="1"/>
</dbReference>
<dbReference type="Pfam" id="PF21680">
    <property type="entry name" value="GIDA_C_1st"/>
    <property type="match status" value="1"/>
</dbReference>
<dbReference type="Pfam" id="PF13932">
    <property type="entry name" value="SAM_GIDA_C"/>
    <property type="match status" value="1"/>
</dbReference>
<dbReference type="PRINTS" id="PR00368">
    <property type="entry name" value="FADPNR"/>
</dbReference>
<dbReference type="PRINTS" id="PR00411">
    <property type="entry name" value="PNDRDTASEI"/>
</dbReference>
<dbReference type="SMART" id="SM01228">
    <property type="entry name" value="GIDA_assoc_3"/>
    <property type="match status" value="1"/>
</dbReference>
<dbReference type="SUPFAM" id="SSF51905">
    <property type="entry name" value="FAD/NAD(P)-binding domain"/>
    <property type="match status" value="1"/>
</dbReference>
<dbReference type="PROSITE" id="PS01280">
    <property type="entry name" value="GIDA_1"/>
    <property type="match status" value="1"/>
</dbReference>
<dbReference type="PROSITE" id="PS01281">
    <property type="entry name" value="GIDA_2"/>
    <property type="match status" value="1"/>
</dbReference>
<name>MNMG_STRT1</name>
<comment type="function">
    <text evidence="1">NAD-binding protein involved in the addition of a carboxymethylaminomethyl (cmnm) group at the wobble position (U34) of certain tRNAs, forming tRNA-cmnm(5)s(2)U34.</text>
</comment>
<comment type="cofactor">
    <cofactor evidence="1">
        <name>FAD</name>
        <dbReference type="ChEBI" id="CHEBI:57692"/>
    </cofactor>
</comment>
<comment type="subunit">
    <text evidence="1">Homodimer. Heterotetramer of two MnmE and two MnmG subunits.</text>
</comment>
<comment type="subcellular location">
    <subcellularLocation>
        <location evidence="1">Cytoplasm</location>
    </subcellularLocation>
</comment>
<comment type="similarity">
    <text evidence="1">Belongs to the MnmG family.</text>
</comment>
<comment type="sequence caution" evidence="2">
    <conflict type="erroneous initiation">
        <sequence resource="EMBL-CDS" id="AAV63512"/>
    </conflict>
</comment>
<reference key="1">
    <citation type="journal article" date="2004" name="Nat. Biotechnol.">
        <title>Complete sequence and comparative genome analysis of the dairy bacterium Streptococcus thermophilus.</title>
        <authorList>
            <person name="Bolotin A."/>
            <person name="Quinquis B."/>
            <person name="Renault P."/>
            <person name="Sorokin A."/>
            <person name="Ehrlich S.D."/>
            <person name="Kulakauskas S."/>
            <person name="Lapidus A."/>
            <person name="Goltsman E."/>
            <person name="Mazur M."/>
            <person name="Pusch G.D."/>
            <person name="Fonstein M."/>
            <person name="Overbeek R."/>
            <person name="Kyprides N."/>
            <person name="Purnelle B."/>
            <person name="Prozzi D."/>
            <person name="Ngui K."/>
            <person name="Masuy D."/>
            <person name="Hancy F."/>
            <person name="Burteau S."/>
            <person name="Boutry M."/>
            <person name="Delcour J."/>
            <person name="Goffeau A."/>
            <person name="Hols P."/>
        </authorList>
    </citation>
    <scope>NUCLEOTIDE SEQUENCE [LARGE SCALE GENOMIC DNA]</scope>
    <source>
        <strain>CNRZ 1066</strain>
    </source>
</reference>
<sequence length="633" mass="70432">MSYEFDENFDVIVVGAGHAGVEASLAAARMGCKVLLATINLEMLAFMPCNPSIGGSAKGIVVREIDALGGEMGKNIDKTYIQMKMLNTGKGPAVRALRAQADKALYAMTMKHTVERQENLTLRQSMVDEILVEDSKVVGVRTATNQKYGAKAVVVTTGTALRGEIIIGDLKYSSGPNNSLASVTLADNLKELGLEIGRFKTGTPPRVKASSINYEETEIQPGDEKPNHFSFLSKDEDYLQDQIPCWLTYTNQESHDIINNNLHRAPMFSGIVKGVGPRYCPSIEDKIVRFADKNRHQLFLEPEGRETEEVYVQGLSTSLPEDVQKELIHSIKGLEKAEMIRTGYAIEYDIVLPHQLRATLETKLISGLFTAGQTNGTSGYEEAAGQGLVAGINAALKVQGKPELILKRSDAYIGVMIDDLVTKGTLEPYRLLTSRAEYRLILRHDNADMRLTPIGREVGLVDDERWNIFKIKKNQFDRELTRLSKEKLKPIKETNEKIQALGFKPLTDAMTAKEFMRRPEIDYATATQFVGPAAEDLDAKVIELLETEIKYEGYINKALDQVAKMKRMEEKKIPENIDWDAIDSIATEARQKFKKINPETIGQASRISGVNPADISILMVYLEGNNKARRKVD</sequence>
<protein>
    <recommendedName>
        <fullName evidence="1">tRNA uridine 5-carboxymethylaminomethyl modification enzyme MnmG</fullName>
    </recommendedName>
    <alternativeName>
        <fullName evidence="1">Glucose-inhibited division protein A</fullName>
    </alternativeName>
</protein>
<feature type="chain" id="PRO_0000117194" description="tRNA uridine 5-carboxymethylaminomethyl modification enzyme MnmG">
    <location>
        <begin position="1"/>
        <end position="633"/>
    </location>
</feature>
<feature type="binding site" evidence="1">
    <location>
        <begin position="15"/>
        <end position="20"/>
    </location>
    <ligand>
        <name>FAD</name>
        <dbReference type="ChEBI" id="CHEBI:57692"/>
    </ligand>
</feature>
<feature type="binding site" evidence="1">
    <location>
        <position position="127"/>
    </location>
    <ligand>
        <name>FAD</name>
        <dbReference type="ChEBI" id="CHEBI:57692"/>
    </ligand>
</feature>
<feature type="binding site" evidence="1">
    <location>
        <position position="182"/>
    </location>
    <ligand>
        <name>FAD</name>
        <dbReference type="ChEBI" id="CHEBI:57692"/>
    </ligand>
</feature>
<feature type="binding site" evidence="1">
    <location>
        <begin position="276"/>
        <end position="290"/>
    </location>
    <ligand>
        <name>NAD(+)</name>
        <dbReference type="ChEBI" id="CHEBI:57540"/>
    </ligand>
</feature>
<feature type="binding site" evidence="1">
    <location>
        <position position="373"/>
    </location>
    <ligand>
        <name>FAD</name>
        <dbReference type="ChEBI" id="CHEBI:57692"/>
    </ligand>
</feature>